<sequence>MGTTKVTAPLIFAISVATIGSFQFGYNTGVINAPEAIIKDFLNYTLEERSEPPPSSVLLTSLWSLSVAIFSVGGMIGSFSVGLFVNRFGRGNSMLIVNLLAIAGGCLMGFCKIAESVEMLILGRLIIGLFCGLCTGFVPMYIGEISPTALRGAFGTLNQLGIVIGILVAQIFGLKVILGTEDLWPLLLGFTILPAIIQCAALPFCPESPRFLLINRKEEEKAKEILQRLWGTEDVAQDIQEMKDESMRMSQEKQVTVLELFRAPNYRQPIIISIMLQLSQQLSGINAVFYYSTGIFKDAGVQEPVYATIGAGVVNTIFTVVSVFLVERAGRRTLHLIGLGGMAFCSILMTISLLLKDNYSWMSFICIGAILVFVAFFEIGPGPIPWFIVAELFGQGPRPAAMAVAGCSNWTSNFLVGLLFPSAAFYLGAYVFIVFTVFLVIFWVFTFFKVPETRGRTFEEITRAFEGQTQTGTRGEKGPIMEMNSIQPTKDTNA</sequence>
<keyword id="KW-1003">Cell membrane</keyword>
<keyword id="KW-0966">Cell projection</keyword>
<keyword id="KW-0325">Glycoprotein</keyword>
<keyword id="KW-0472">Membrane</keyword>
<keyword id="KW-0597">Phosphoprotein</keyword>
<keyword id="KW-1185">Reference proteome</keyword>
<keyword id="KW-0762">Sugar transport</keyword>
<keyword id="KW-0812">Transmembrane</keyword>
<keyword id="KW-1133">Transmembrane helix</keyword>
<keyword id="KW-0813">Transport</keyword>
<gene>
    <name evidence="1" type="primary">SLC2A3</name>
    <name evidence="6" type="synonym">GLUT3</name>
</gene>
<dbReference type="EMBL" id="AY033938">
    <property type="protein sequence ID" value="AAK70222.1"/>
    <property type="molecule type" value="mRNA"/>
</dbReference>
<dbReference type="EMBL" id="AF308829">
    <property type="protein sequence ID" value="AAK63202.1"/>
    <property type="molecule type" value="mRNA"/>
</dbReference>
<dbReference type="SMR" id="P58352"/>
<dbReference type="FunCoup" id="P58352">
    <property type="interactions" value="485"/>
</dbReference>
<dbReference type="STRING" id="9913.ENSBTAP00000040493"/>
<dbReference type="GlyCosmos" id="P58352">
    <property type="glycosylation" value="2 sites, No reported glycans"/>
</dbReference>
<dbReference type="GlyGen" id="P58352">
    <property type="glycosylation" value="2 sites"/>
</dbReference>
<dbReference type="PaxDb" id="9913-ENSBTAP00000040493"/>
<dbReference type="eggNOG" id="KOG0569">
    <property type="taxonomic scope" value="Eukaryota"/>
</dbReference>
<dbReference type="InParanoid" id="P58352"/>
<dbReference type="OrthoDB" id="4540492at2759"/>
<dbReference type="Proteomes" id="UP000009136">
    <property type="component" value="Unplaced"/>
</dbReference>
<dbReference type="GO" id="GO:0042995">
    <property type="term" value="C:cell projection"/>
    <property type="evidence" value="ECO:0007669"/>
    <property type="project" value="UniProtKB-SubCell"/>
</dbReference>
<dbReference type="GO" id="GO:0016020">
    <property type="term" value="C:membrane"/>
    <property type="evidence" value="ECO:0000250"/>
    <property type="project" value="UniProtKB"/>
</dbReference>
<dbReference type="GO" id="GO:0043204">
    <property type="term" value="C:perikaryon"/>
    <property type="evidence" value="ECO:0007669"/>
    <property type="project" value="UniProtKB-SubCell"/>
</dbReference>
<dbReference type="GO" id="GO:0005886">
    <property type="term" value="C:plasma membrane"/>
    <property type="evidence" value="ECO:0000250"/>
    <property type="project" value="UniProtKB"/>
</dbReference>
<dbReference type="GO" id="GO:0005536">
    <property type="term" value="F:D-glucose binding"/>
    <property type="evidence" value="ECO:0000250"/>
    <property type="project" value="UniProtKB"/>
</dbReference>
<dbReference type="GO" id="GO:0055056">
    <property type="term" value="F:D-glucose transmembrane transporter activity"/>
    <property type="evidence" value="ECO:0000250"/>
    <property type="project" value="UniProtKB"/>
</dbReference>
<dbReference type="GO" id="GO:0005354">
    <property type="term" value="F:galactose transmembrane transporter activity"/>
    <property type="evidence" value="ECO:0000250"/>
    <property type="project" value="UniProtKB"/>
</dbReference>
<dbReference type="GO" id="GO:0046323">
    <property type="term" value="P:D-glucose import"/>
    <property type="evidence" value="ECO:0000318"/>
    <property type="project" value="GO_Central"/>
</dbReference>
<dbReference type="GO" id="GO:1904659">
    <property type="term" value="P:D-glucose transmembrane transport"/>
    <property type="evidence" value="ECO:0000250"/>
    <property type="project" value="UniProtKB"/>
</dbReference>
<dbReference type="GO" id="GO:0070837">
    <property type="term" value="P:dehydroascorbic acid transport"/>
    <property type="evidence" value="ECO:0000318"/>
    <property type="project" value="GO_Central"/>
</dbReference>
<dbReference type="GO" id="GO:0015757">
    <property type="term" value="P:galactose transmembrane transport"/>
    <property type="evidence" value="ECO:0000250"/>
    <property type="project" value="UniProtKB"/>
</dbReference>
<dbReference type="CDD" id="cd17431">
    <property type="entry name" value="MFS_GLUT_Class1"/>
    <property type="match status" value="1"/>
</dbReference>
<dbReference type="FunFam" id="1.20.1250.20:FF:000040">
    <property type="entry name" value="Solute carrier family 2, facilitated glucose transporter member 1"/>
    <property type="match status" value="1"/>
</dbReference>
<dbReference type="Gene3D" id="1.20.1250.20">
    <property type="entry name" value="MFS general substrate transporter like domains"/>
    <property type="match status" value="1"/>
</dbReference>
<dbReference type="InterPro" id="IPR002945">
    <property type="entry name" value="Glc_transpt_3"/>
</dbReference>
<dbReference type="InterPro" id="IPR045263">
    <property type="entry name" value="GLUT"/>
</dbReference>
<dbReference type="InterPro" id="IPR020846">
    <property type="entry name" value="MFS_dom"/>
</dbReference>
<dbReference type="InterPro" id="IPR005828">
    <property type="entry name" value="MFS_sugar_transport-like"/>
</dbReference>
<dbReference type="InterPro" id="IPR036259">
    <property type="entry name" value="MFS_trans_sf"/>
</dbReference>
<dbReference type="InterPro" id="IPR003663">
    <property type="entry name" value="Sugar/inositol_transpt"/>
</dbReference>
<dbReference type="InterPro" id="IPR005829">
    <property type="entry name" value="Sugar_transporter_CS"/>
</dbReference>
<dbReference type="NCBIfam" id="TIGR00879">
    <property type="entry name" value="SP"/>
    <property type="match status" value="1"/>
</dbReference>
<dbReference type="PANTHER" id="PTHR23503">
    <property type="entry name" value="SOLUTE CARRIER FAMILY 2"/>
    <property type="match status" value="1"/>
</dbReference>
<dbReference type="PANTHER" id="PTHR23503:SF99">
    <property type="entry name" value="SOLUTE CARRIER FAMILY 2, FACILITATED GLUCOSE TRANSPORTER MEMBER 3"/>
    <property type="match status" value="1"/>
</dbReference>
<dbReference type="Pfam" id="PF00083">
    <property type="entry name" value="Sugar_tr"/>
    <property type="match status" value="1"/>
</dbReference>
<dbReference type="PRINTS" id="PR01192">
    <property type="entry name" value="GLUCTRSPORT3"/>
</dbReference>
<dbReference type="PRINTS" id="PR00171">
    <property type="entry name" value="SUGRTRNSPORT"/>
</dbReference>
<dbReference type="SUPFAM" id="SSF103473">
    <property type="entry name" value="MFS general substrate transporter"/>
    <property type="match status" value="1"/>
</dbReference>
<dbReference type="PROSITE" id="PS50850">
    <property type="entry name" value="MFS"/>
    <property type="match status" value="1"/>
</dbReference>
<dbReference type="PROSITE" id="PS00216">
    <property type="entry name" value="SUGAR_TRANSPORT_1"/>
    <property type="match status" value="1"/>
</dbReference>
<dbReference type="PROSITE" id="PS00217">
    <property type="entry name" value="SUGAR_TRANSPORT_2"/>
    <property type="match status" value="1"/>
</dbReference>
<organism>
    <name type="scientific">Bos taurus</name>
    <name type="common">Bovine</name>
    <dbReference type="NCBI Taxonomy" id="9913"/>
    <lineage>
        <taxon>Eukaryota</taxon>
        <taxon>Metazoa</taxon>
        <taxon>Chordata</taxon>
        <taxon>Craniata</taxon>
        <taxon>Vertebrata</taxon>
        <taxon>Euteleostomi</taxon>
        <taxon>Mammalia</taxon>
        <taxon>Eutheria</taxon>
        <taxon>Laurasiatheria</taxon>
        <taxon>Artiodactyla</taxon>
        <taxon>Ruminantia</taxon>
        <taxon>Pecora</taxon>
        <taxon>Bovidae</taxon>
        <taxon>Bovinae</taxon>
        <taxon>Bos</taxon>
    </lineage>
</organism>
<reference key="1">
    <citation type="submission" date="2001-05" db="EMBL/GenBank/DDBJ databases">
        <title>Glucose transporter expression during bovine preimplantation embryo development.</title>
        <authorList>
            <person name="Augustin R."/>
            <person name="Fischer B."/>
        </authorList>
    </citation>
    <scope>NUCLEOTIDE SEQUENCE [MRNA]</scope>
</reference>
<reference key="2">
    <citation type="submission" date="2000-09" db="EMBL/GenBank/DDBJ databases">
        <title>Expression of glucose transporters amongst ruminants.</title>
        <authorList>
            <person name="Augustin R."/>
            <person name="Navarrete-Santos A."/>
            <person name="Fischer B."/>
        </authorList>
    </citation>
    <scope>NUCLEOTIDE SEQUENCE [MRNA] OF 385-494</scope>
    <source>
        <tissue>Brain</tissue>
    </source>
</reference>
<feature type="chain" id="PRO_0000050351" description="Solute carrier family 2, facilitated glucose transporter member 3">
    <location>
        <begin position="1"/>
        <end position="494"/>
    </location>
</feature>
<feature type="topological domain" description="Cytoplasmic" evidence="1">
    <location>
        <begin position="1"/>
        <end position="10"/>
    </location>
</feature>
<feature type="transmembrane region" description="Helical; Name=1" evidence="1 4">
    <location>
        <begin position="11"/>
        <end position="32"/>
    </location>
</feature>
<feature type="topological domain" description="Extracellular" evidence="1">
    <location>
        <begin position="33"/>
        <end position="64"/>
    </location>
</feature>
<feature type="transmembrane region" description="Helical; Name=2" evidence="1 4">
    <location>
        <begin position="65"/>
        <end position="85"/>
    </location>
</feature>
<feature type="topological domain" description="Cytoplasmic" evidence="1">
    <location>
        <begin position="86"/>
        <end position="90"/>
    </location>
</feature>
<feature type="transmembrane region" description="Helical; Name=3" evidence="1 4">
    <location>
        <begin position="91"/>
        <end position="111"/>
    </location>
</feature>
<feature type="topological domain" description="Extracellular" evidence="1">
    <location>
        <begin position="112"/>
        <end position="118"/>
    </location>
</feature>
<feature type="transmembrane region" description="Helical; Name=4" evidence="1 4">
    <location>
        <begin position="119"/>
        <end position="142"/>
    </location>
</feature>
<feature type="topological domain" description="Cytoplasmic" evidence="1">
    <location>
        <begin position="143"/>
        <end position="153"/>
    </location>
</feature>
<feature type="transmembrane region" description="Helical; Name=5" evidence="1 4">
    <location>
        <begin position="154"/>
        <end position="174"/>
    </location>
</feature>
<feature type="topological domain" description="Extracellular" evidence="1">
    <location>
        <begin position="175"/>
        <end position="183"/>
    </location>
</feature>
<feature type="transmembrane region" description="Helical; Name=6" evidence="1 4">
    <location>
        <begin position="184"/>
        <end position="204"/>
    </location>
</feature>
<feature type="topological domain" description="Cytoplasmic" evidence="1">
    <location>
        <begin position="205"/>
        <end position="269"/>
    </location>
</feature>
<feature type="transmembrane region" description="Helical; Name=7" evidence="1 4">
    <location>
        <begin position="270"/>
        <end position="290"/>
    </location>
</feature>
<feature type="topological domain" description="Extracellular" evidence="1">
    <location>
        <begin position="291"/>
        <end position="304"/>
    </location>
</feature>
<feature type="transmembrane region" description="Helical; Name=8" evidence="1 4">
    <location>
        <begin position="305"/>
        <end position="325"/>
    </location>
</feature>
<feature type="topological domain" description="Cytoplasmic" evidence="1">
    <location>
        <begin position="326"/>
        <end position="331"/>
    </location>
</feature>
<feature type="transmembrane region" description="Helical; Name=9" evidence="1 4">
    <location>
        <begin position="332"/>
        <end position="352"/>
    </location>
</feature>
<feature type="topological domain" description="Extracellular" evidence="1">
    <location>
        <begin position="353"/>
        <end position="363"/>
    </location>
</feature>
<feature type="transmembrane region" description="Helical; Name=10" evidence="1 4">
    <location>
        <begin position="364"/>
        <end position="389"/>
    </location>
</feature>
<feature type="topological domain" description="Cytoplasmic" evidence="1">
    <location>
        <begin position="390"/>
        <end position="399"/>
    </location>
</feature>
<feature type="transmembrane region" description="Helical; Name=11" evidence="1 4">
    <location>
        <begin position="400"/>
        <end position="420"/>
    </location>
</feature>
<feature type="topological domain" description="Extracellular" evidence="1">
    <location>
        <begin position="421"/>
        <end position="429"/>
    </location>
</feature>
<feature type="transmembrane region" description="Helical; Name=12" evidence="1 4">
    <location>
        <begin position="430"/>
        <end position="450"/>
    </location>
</feature>
<feature type="topological domain" description="Cytoplasmic" evidence="1">
    <location>
        <begin position="451"/>
        <end position="494"/>
    </location>
</feature>
<feature type="region of interest" description="Important for selectivity against fructose" evidence="1">
    <location>
        <begin position="277"/>
        <end position="279"/>
    </location>
</feature>
<feature type="region of interest" description="Disordered" evidence="5">
    <location>
        <begin position="469"/>
        <end position="494"/>
    </location>
</feature>
<feature type="compositionally biased region" description="Polar residues" evidence="5">
    <location>
        <begin position="484"/>
        <end position="494"/>
    </location>
</feature>
<feature type="binding site" evidence="1">
    <location>
        <position position="159"/>
    </location>
    <ligand>
        <name>D-glucose</name>
        <dbReference type="ChEBI" id="CHEBI:4167"/>
    </ligand>
</feature>
<feature type="binding site" evidence="1">
    <location>
        <begin position="280"/>
        <end position="281"/>
    </location>
    <ligand>
        <name>D-glucose</name>
        <dbReference type="ChEBI" id="CHEBI:4167"/>
    </ligand>
</feature>
<feature type="binding site" evidence="1">
    <location>
        <position position="286"/>
    </location>
    <ligand>
        <name>D-glucose</name>
        <dbReference type="ChEBI" id="CHEBI:4167"/>
    </ligand>
</feature>
<feature type="binding site" evidence="1">
    <location>
        <position position="315"/>
    </location>
    <ligand>
        <name>D-glucose</name>
        <dbReference type="ChEBI" id="CHEBI:4167"/>
    </ligand>
</feature>
<feature type="binding site" evidence="1">
    <location>
        <position position="378"/>
    </location>
    <ligand>
        <name>D-glucose</name>
        <dbReference type="ChEBI" id="CHEBI:4167"/>
    </ligand>
</feature>
<feature type="binding site" evidence="1">
    <location>
        <position position="386"/>
    </location>
    <ligand>
        <name>D-glucose</name>
        <dbReference type="ChEBI" id="CHEBI:4167"/>
    </ligand>
</feature>
<feature type="modified residue" description="Phosphothreonine" evidence="2">
    <location>
        <position position="232"/>
    </location>
</feature>
<feature type="modified residue" description="Phosphoserine" evidence="3">
    <location>
        <position position="485"/>
    </location>
</feature>
<feature type="modified residue" description="Phosphothreonine" evidence="3">
    <location>
        <position position="492"/>
    </location>
</feature>
<feature type="glycosylation site" description="N-linked (GlcNAc...) asparagine" evidence="4">
    <location>
        <position position="43"/>
    </location>
</feature>
<feature type="glycosylation site" description="N-linked (GlcNAc...) asparagine" evidence="4">
    <location>
        <position position="358"/>
    </location>
</feature>
<feature type="sequence conflict" description="In Ref. 2; AAK63202." evidence="7" ref="2">
    <original>PWFIV</original>
    <variation>SLVYC</variation>
    <location>
        <begin position="385"/>
        <end position="389"/>
    </location>
</feature>
<proteinExistence type="evidence at transcript level"/>
<evidence type="ECO:0000250" key="1">
    <source>
        <dbReference type="UniProtKB" id="P11169"/>
    </source>
</evidence>
<evidence type="ECO:0000250" key="2">
    <source>
        <dbReference type="UniProtKB" id="P32037"/>
    </source>
</evidence>
<evidence type="ECO:0000250" key="3">
    <source>
        <dbReference type="UniProtKB" id="Q07647"/>
    </source>
</evidence>
<evidence type="ECO:0000255" key="4"/>
<evidence type="ECO:0000256" key="5">
    <source>
        <dbReference type="SAM" id="MobiDB-lite"/>
    </source>
</evidence>
<evidence type="ECO:0000303" key="6">
    <source ref="1"/>
</evidence>
<evidence type="ECO:0000305" key="7"/>
<accession>P58352</accession>
<comment type="function">
    <text evidence="1 2">Facilitative glucose transporter. Can also mediate the uptake of various other monosaccharides across the cell membrane. Mediates the uptake of glucose, 2-deoxyglucose, galactose, mannose, xylose and fucose, and probably also dehydroascorbate. Does not mediate fructose transport. Required for mesendoderm differentiation (By similarity).</text>
</comment>
<comment type="catalytic activity">
    <reaction evidence="1">
        <text>D-glucose(out) = D-glucose(in)</text>
        <dbReference type="Rhea" id="RHEA:60376"/>
        <dbReference type="ChEBI" id="CHEBI:4167"/>
    </reaction>
</comment>
<comment type="catalytic activity">
    <reaction evidence="1">
        <text>D-galactose(in) = D-galactose(out)</text>
        <dbReference type="Rhea" id="RHEA:34915"/>
        <dbReference type="ChEBI" id="CHEBI:4139"/>
    </reaction>
</comment>
<comment type="activity regulation">
    <text evidence="1">Deoxyglucose transport is inhibited by D-glucose, D-galactose and maltose. Galactose transport is inhibited by D-glucose and maltose.</text>
</comment>
<comment type="subunit">
    <text evidence="2">Interacts with SMIM43; the interaction may promote SLC2A1-mediated glucose transport to meet the energy needs of mesendoderm differentiation.</text>
</comment>
<comment type="subcellular location">
    <subcellularLocation>
        <location evidence="1">Cell membrane</location>
        <topology evidence="1">Multi-pass membrane protein</topology>
    </subcellularLocation>
    <subcellularLocation>
        <location evidence="3">Perikaryon</location>
    </subcellularLocation>
    <subcellularLocation>
        <location evidence="3">Cell projection</location>
    </subcellularLocation>
    <text evidence="3">Localized to densely spaced patches along neuronal processes.</text>
</comment>
<comment type="domain">
    <text evidence="1">Transport is mediated via a series of conformation changes, switching between a conformation where the substrate-binding cavity is accessible from the outside, and a another conformation where it is accessible from the cytoplasm.</text>
</comment>
<comment type="similarity">
    <text evidence="7">Belongs to the major facilitator superfamily. Sugar transporter (TC 2.A.1.1) family. Glucose transporter subfamily.</text>
</comment>
<name>GTR3_BOVIN</name>
<protein>
    <recommendedName>
        <fullName evidence="7">Solute carrier family 2, facilitated glucose transporter member 3</fullName>
    </recommendedName>
    <alternativeName>
        <fullName evidence="6">Glucose transporter type 3, brain</fullName>
        <shortName evidence="6">GLUT-3</shortName>
    </alternativeName>
</protein>